<gene>
    <name type="ordered locus">NGR_a03820</name>
    <name type="ORF">y4eN</name>
</gene>
<name>Y4EN_SINFN</name>
<proteinExistence type="predicted"/>
<geneLocation type="plasmid">
    <name>sym pNGR234a</name>
</geneLocation>
<sequence length="103" mass="11455">MKFLIDECLSPELAKMAIEKGHGETSHVVWMKLGGLKDWELKPIILEGDWTFVTKNSVDFRGPKDKPGTKGQYADVAIHAGLICLNGHPAWTSTCRSSCLSRR</sequence>
<organism>
    <name type="scientific">Sinorhizobium fredii (strain NBRC 101917 / NGR234)</name>
    <dbReference type="NCBI Taxonomy" id="394"/>
    <lineage>
        <taxon>Bacteria</taxon>
        <taxon>Pseudomonadati</taxon>
        <taxon>Pseudomonadota</taxon>
        <taxon>Alphaproteobacteria</taxon>
        <taxon>Hyphomicrobiales</taxon>
        <taxon>Rhizobiaceae</taxon>
        <taxon>Sinorhizobium/Ensifer group</taxon>
        <taxon>Sinorhizobium</taxon>
    </lineage>
</organism>
<keyword id="KW-0614">Plasmid</keyword>
<keyword id="KW-1185">Reference proteome</keyword>
<feature type="chain" id="PRO_0000200832" description="Uncharacterized protein y4eN">
    <location>
        <begin position="1"/>
        <end position="103"/>
    </location>
</feature>
<reference key="1">
    <citation type="journal article" date="1997" name="Nature">
        <title>Molecular basis of symbiosis between Rhizobium and legumes.</title>
        <authorList>
            <person name="Freiberg C.A."/>
            <person name="Fellay R."/>
            <person name="Bairoch A."/>
            <person name="Broughton W.J."/>
            <person name="Rosenthal A."/>
            <person name="Perret X."/>
        </authorList>
    </citation>
    <scope>NUCLEOTIDE SEQUENCE [LARGE SCALE GENOMIC DNA]</scope>
    <source>
        <strain>NBRC 101917 / NGR234</strain>
    </source>
</reference>
<reference key="2">
    <citation type="journal article" date="2009" name="Appl. Environ. Microbiol.">
        <title>Rhizobium sp. strain NGR234 possesses a remarkable number of secretion systems.</title>
        <authorList>
            <person name="Schmeisser C."/>
            <person name="Liesegang H."/>
            <person name="Krysciak D."/>
            <person name="Bakkou N."/>
            <person name="Le Quere A."/>
            <person name="Wollherr A."/>
            <person name="Heinemeyer I."/>
            <person name="Morgenstern B."/>
            <person name="Pommerening-Roeser A."/>
            <person name="Flores M."/>
            <person name="Palacios R."/>
            <person name="Brenner S."/>
            <person name="Gottschalk G."/>
            <person name="Schmitz R.A."/>
            <person name="Broughton W.J."/>
            <person name="Perret X."/>
            <person name="Strittmatter A.W."/>
            <person name="Streit W.R."/>
        </authorList>
    </citation>
    <scope>NUCLEOTIDE SEQUENCE [LARGE SCALE GENOMIC DNA]</scope>
    <source>
        <strain>NBRC 101917 / NGR234</strain>
    </source>
</reference>
<protein>
    <recommendedName>
        <fullName>Uncharacterized protein y4eN</fullName>
    </recommendedName>
</protein>
<accession>P55437</accession>
<dbReference type="EMBL" id="U00090">
    <property type="protein sequence ID" value="AAB91656.1"/>
    <property type="molecule type" value="Genomic_DNA"/>
</dbReference>
<dbReference type="RefSeq" id="NP_443844.1">
    <property type="nucleotide sequence ID" value="NC_000914.2"/>
</dbReference>
<dbReference type="RefSeq" id="WP_010875394.1">
    <property type="nucleotide sequence ID" value="NC_000914.2"/>
</dbReference>
<dbReference type="KEGG" id="rhi:NGR_a03820"/>
<dbReference type="PATRIC" id="fig|394.7.peg.391"/>
<dbReference type="eggNOG" id="COG4634">
    <property type="taxonomic scope" value="Bacteria"/>
</dbReference>
<dbReference type="HOGENOM" id="CLU_178525_0_0_5"/>
<dbReference type="OrthoDB" id="7363756at2"/>
<dbReference type="Proteomes" id="UP000001054">
    <property type="component" value="Plasmid pNGR234a"/>
</dbReference>
<dbReference type="InterPro" id="IPR041049">
    <property type="entry name" value="DUF5615"/>
</dbReference>
<dbReference type="Pfam" id="PF18480">
    <property type="entry name" value="DUF5615"/>
    <property type="match status" value="1"/>
</dbReference>